<accession>Q98D72</accession>
<organism>
    <name type="scientific">Mesorhizobium japonicum (strain LMG 29417 / CECT 9101 / MAFF 303099)</name>
    <name type="common">Mesorhizobium loti (strain MAFF 303099)</name>
    <dbReference type="NCBI Taxonomy" id="266835"/>
    <lineage>
        <taxon>Bacteria</taxon>
        <taxon>Pseudomonadati</taxon>
        <taxon>Pseudomonadota</taxon>
        <taxon>Alphaproteobacteria</taxon>
        <taxon>Hyphomicrobiales</taxon>
        <taxon>Phyllobacteriaceae</taxon>
        <taxon>Mesorhizobium</taxon>
    </lineage>
</organism>
<sequence>MSVAEYARDCAAQGLRGDYSVCRADFTVAQDYDYSDEEQAVWRTLCDRQTKLTRKLAHHSYLDGVEKLGLLDRIPDFEDVSTKLRKLTGWEIIAVPGLIPAAPFFDHLANRRFPVTNWLRTRQELDYIVEPDMFHDFFGHVPVLSQPVFADFMQMYGKKAGDIIALGGDEMITRLYWYTAEYGLVQEAGQPLKAFGAGLMSSFTELQFAVEGKDAHHVPFDLETVMRTGYEIDKFQRAYFVLPSFDALRDAFQTADFEAIVARRKDQKALDPATV</sequence>
<comment type="catalytic activity">
    <reaction>
        <text>(6R)-L-erythro-5,6,7,8-tetrahydrobiopterin + L-phenylalanine + O2 = (4aS,6R)-4a-hydroxy-L-erythro-5,6,7,8-tetrahydrobiopterin + L-tyrosine</text>
        <dbReference type="Rhea" id="RHEA:20273"/>
        <dbReference type="ChEBI" id="CHEBI:15379"/>
        <dbReference type="ChEBI" id="CHEBI:15642"/>
        <dbReference type="ChEBI" id="CHEBI:58095"/>
        <dbReference type="ChEBI" id="CHEBI:58315"/>
        <dbReference type="ChEBI" id="CHEBI:59560"/>
        <dbReference type="EC" id="1.14.16.1"/>
    </reaction>
</comment>
<comment type="cofactor">
    <cofactor evidence="1">
        <name>Fe(2+)</name>
        <dbReference type="ChEBI" id="CHEBI:29033"/>
    </cofactor>
    <text evidence="1">Binds 1 Fe(2+) ion.</text>
</comment>
<comment type="pathway">
    <text>Amino-acid degradation; L-phenylalanine degradation; acetoacetate and fumarate from L-phenylalanine: step 1/6.</text>
</comment>
<comment type="similarity">
    <text evidence="3">Belongs to the biopterin-dependent aromatic amino acid hydroxylase family.</text>
</comment>
<dbReference type="EC" id="1.14.16.1"/>
<dbReference type="EMBL" id="BA000012">
    <property type="protein sequence ID" value="BAB51399.1"/>
    <property type="molecule type" value="Genomic_DNA"/>
</dbReference>
<dbReference type="SMR" id="Q98D72"/>
<dbReference type="KEGG" id="mlo:mlr4831"/>
<dbReference type="eggNOG" id="COG3186">
    <property type="taxonomic scope" value="Bacteria"/>
</dbReference>
<dbReference type="HOGENOM" id="CLU_023198_1_0_5"/>
<dbReference type="UniPathway" id="UPA00139">
    <property type="reaction ID" value="UER00337"/>
</dbReference>
<dbReference type="Proteomes" id="UP000000552">
    <property type="component" value="Chromosome"/>
</dbReference>
<dbReference type="GO" id="GO:0005506">
    <property type="term" value="F:iron ion binding"/>
    <property type="evidence" value="ECO:0007669"/>
    <property type="project" value="InterPro"/>
</dbReference>
<dbReference type="GO" id="GO:0004505">
    <property type="term" value="F:phenylalanine 4-monooxygenase activity"/>
    <property type="evidence" value="ECO:0007669"/>
    <property type="project" value="UniProtKB-EC"/>
</dbReference>
<dbReference type="GO" id="GO:0006559">
    <property type="term" value="P:L-phenylalanine catabolic process"/>
    <property type="evidence" value="ECO:0007669"/>
    <property type="project" value="UniProtKB-UniPathway"/>
</dbReference>
<dbReference type="CDD" id="cd03348">
    <property type="entry name" value="pro_PheOH"/>
    <property type="match status" value="1"/>
</dbReference>
<dbReference type="Gene3D" id="1.10.800.10">
    <property type="entry name" value="Aromatic amino acid hydroxylase"/>
    <property type="match status" value="1"/>
</dbReference>
<dbReference type="InterPro" id="IPR001273">
    <property type="entry name" value="ArAA_hydroxylase"/>
</dbReference>
<dbReference type="InterPro" id="IPR018301">
    <property type="entry name" value="ArAA_hydroxylase_Fe/CU_BS"/>
</dbReference>
<dbReference type="InterPro" id="IPR036951">
    <property type="entry name" value="ArAA_hydroxylase_sf"/>
</dbReference>
<dbReference type="InterPro" id="IPR036329">
    <property type="entry name" value="Aro-AA_hydroxylase_C_sf"/>
</dbReference>
<dbReference type="InterPro" id="IPR019774">
    <property type="entry name" value="Aromatic-AA_hydroxylase_C"/>
</dbReference>
<dbReference type="InterPro" id="IPR005960">
    <property type="entry name" value="Phe-4-hydroxylase_mono"/>
</dbReference>
<dbReference type="NCBIfam" id="TIGR01267">
    <property type="entry name" value="Phe4hydrox_mono"/>
    <property type="match status" value="1"/>
</dbReference>
<dbReference type="NCBIfam" id="NF008877">
    <property type="entry name" value="PRK11913.1-2"/>
    <property type="match status" value="1"/>
</dbReference>
<dbReference type="PANTHER" id="PTHR11473">
    <property type="entry name" value="AROMATIC AMINO ACID HYDROXYLASE"/>
    <property type="match status" value="1"/>
</dbReference>
<dbReference type="PANTHER" id="PTHR11473:SF24">
    <property type="entry name" value="PHENYLALANINE-4-HYDROXYLASE"/>
    <property type="match status" value="1"/>
</dbReference>
<dbReference type="Pfam" id="PF00351">
    <property type="entry name" value="Biopterin_H"/>
    <property type="match status" value="1"/>
</dbReference>
<dbReference type="PRINTS" id="PR00372">
    <property type="entry name" value="FYWHYDRXLASE"/>
</dbReference>
<dbReference type="SUPFAM" id="SSF56534">
    <property type="entry name" value="Aromatic aminoacid monoxygenases, catalytic and oligomerization domains"/>
    <property type="match status" value="1"/>
</dbReference>
<dbReference type="PROSITE" id="PS00367">
    <property type="entry name" value="BH4_AAA_HYDROXYL_1"/>
    <property type="match status" value="1"/>
</dbReference>
<dbReference type="PROSITE" id="PS51410">
    <property type="entry name" value="BH4_AAA_HYDROXYL_2"/>
    <property type="match status" value="1"/>
</dbReference>
<evidence type="ECO:0000250" key="1"/>
<evidence type="ECO:0000255" key="2"/>
<evidence type="ECO:0000305" key="3"/>
<gene>
    <name type="primary">phhA</name>
    <name type="ordered locus">mlr4831</name>
</gene>
<protein>
    <recommendedName>
        <fullName>Phenylalanine-4-hydroxylase</fullName>
        <shortName>PAH</shortName>
        <ecNumber>1.14.16.1</ecNumber>
    </recommendedName>
    <alternativeName>
        <fullName>Phe-4-monooxygenase</fullName>
    </alternativeName>
</protein>
<keyword id="KW-0408">Iron</keyword>
<keyword id="KW-0479">Metal-binding</keyword>
<keyword id="KW-0503">Monooxygenase</keyword>
<keyword id="KW-0560">Oxidoreductase</keyword>
<keyword id="KW-0585">Phenylalanine catabolism</keyword>
<name>PH4H_RHILO</name>
<feature type="chain" id="PRO_0000205557" description="Phenylalanine-4-hydroxylase">
    <location>
        <begin position="1"/>
        <end position="275"/>
    </location>
</feature>
<feature type="binding site" evidence="2">
    <location>
        <position position="135"/>
    </location>
    <ligand>
        <name>Fe cation</name>
        <dbReference type="ChEBI" id="CHEBI:24875"/>
    </ligand>
</feature>
<feature type="binding site" evidence="2">
    <location>
        <position position="140"/>
    </location>
    <ligand>
        <name>Fe cation</name>
        <dbReference type="ChEBI" id="CHEBI:24875"/>
    </ligand>
</feature>
<feature type="binding site" evidence="2">
    <location>
        <position position="181"/>
    </location>
    <ligand>
        <name>Fe cation</name>
        <dbReference type="ChEBI" id="CHEBI:24875"/>
    </ligand>
</feature>
<reference key="1">
    <citation type="journal article" date="2000" name="DNA Res.">
        <title>Complete genome structure of the nitrogen-fixing symbiotic bacterium Mesorhizobium loti.</title>
        <authorList>
            <person name="Kaneko T."/>
            <person name="Nakamura Y."/>
            <person name="Sato S."/>
            <person name="Asamizu E."/>
            <person name="Kato T."/>
            <person name="Sasamoto S."/>
            <person name="Watanabe A."/>
            <person name="Idesawa K."/>
            <person name="Ishikawa A."/>
            <person name="Kawashima K."/>
            <person name="Kimura T."/>
            <person name="Kishida Y."/>
            <person name="Kiyokawa C."/>
            <person name="Kohara M."/>
            <person name="Matsumoto M."/>
            <person name="Matsuno A."/>
            <person name="Mochizuki Y."/>
            <person name="Nakayama S."/>
            <person name="Nakazaki N."/>
            <person name="Shimpo S."/>
            <person name="Sugimoto M."/>
            <person name="Takeuchi C."/>
            <person name="Yamada M."/>
            <person name="Tabata S."/>
        </authorList>
    </citation>
    <scope>NUCLEOTIDE SEQUENCE [LARGE SCALE GENOMIC DNA]</scope>
    <source>
        <strain>LMG 29417 / CECT 9101 / MAFF 303099</strain>
    </source>
</reference>
<proteinExistence type="inferred from homology"/>